<dbReference type="EC" id="7.3.2.1" evidence="1"/>
<dbReference type="EMBL" id="CP000301">
    <property type="protein sequence ID" value="ABD90442.1"/>
    <property type="molecule type" value="Genomic_DNA"/>
</dbReference>
<dbReference type="SMR" id="Q20WP4"/>
<dbReference type="STRING" id="316056.RPC_4920"/>
<dbReference type="KEGG" id="rpc:RPC_4920"/>
<dbReference type="eggNOG" id="COG1117">
    <property type="taxonomic scope" value="Bacteria"/>
</dbReference>
<dbReference type="HOGENOM" id="CLU_000604_1_22_5"/>
<dbReference type="OrthoDB" id="9802264at2"/>
<dbReference type="GO" id="GO:0005886">
    <property type="term" value="C:plasma membrane"/>
    <property type="evidence" value="ECO:0007669"/>
    <property type="project" value="UniProtKB-SubCell"/>
</dbReference>
<dbReference type="GO" id="GO:0005524">
    <property type="term" value="F:ATP binding"/>
    <property type="evidence" value="ECO:0007669"/>
    <property type="project" value="UniProtKB-KW"/>
</dbReference>
<dbReference type="GO" id="GO:0016887">
    <property type="term" value="F:ATP hydrolysis activity"/>
    <property type="evidence" value="ECO:0007669"/>
    <property type="project" value="InterPro"/>
</dbReference>
<dbReference type="GO" id="GO:0015415">
    <property type="term" value="F:ATPase-coupled phosphate ion transmembrane transporter activity"/>
    <property type="evidence" value="ECO:0007669"/>
    <property type="project" value="UniProtKB-EC"/>
</dbReference>
<dbReference type="GO" id="GO:0035435">
    <property type="term" value="P:phosphate ion transmembrane transport"/>
    <property type="evidence" value="ECO:0007669"/>
    <property type="project" value="InterPro"/>
</dbReference>
<dbReference type="CDD" id="cd03260">
    <property type="entry name" value="ABC_PstB_phosphate_transporter"/>
    <property type="match status" value="1"/>
</dbReference>
<dbReference type="FunFam" id="3.40.50.300:FF:000132">
    <property type="entry name" value="Phosphate import ATP-binding protein PstB"/>
    <property type="match status" value="1"/>
</dbReference>
<dbReference type="Gene3D" id="3.40.50.300">
    <property type="entry name" value="P-loop containing nucleotide triphosphate hydrolases"/>
    <property type="match status" value="1"/>
</dbReference>
<dbReference type="InterPro" id="IPR003593">
    <property type="entry name" value="AAA+_ATPase"/>
</dbReference>
<dbReference type="InterPro" id="IPR003439">
    <property type="entry name" value="ABC_transporter-like_ATP-bd"/>
</dbReference>
<dbReference type="InterPro" id="IPR017871">
    <property type="entry name" value="ABC_transporter-like_CS"/>
</dbReference>
<dbReference type="InterPro" id="IPR027417">
    <property type="entry name" value="P-loop_NTPase"/>
</dbReference>
<dbReference type="InterPro" id="IPR005670">
    <property type="entry name" value="PstB-like"/>
</dbReference>
<dbReference type="NCBIfam" id="TIGR00972">
    <property type="entry name" value="3a0107s01c2"/>
    <property type="match status" value="1"/>
</dbReference>
<dbReference type="PANTHER" id="PTHR43423">
    <property type="entry name" value="ABC TRANSPORTER I FAMILY MEMBER 17"/>
    <property type="match status" value="1"/>
</dbReference>
<dbReference type="PANTHER" id="PTHR43423:SF3">
    <property type="entry name" value="PHOSPHATE IMPORT ATP-BINDING PROTEIN PSTB"/>
    <property type="match status" value="1"/>
</dbReference>
<dbReference type="Pfam" id="PF00005">
    <property type="entry name" value="ABC_tran"/>
    <property type="match status" value="1"/>
</dbReference>
<dbReference type="SMART" id="SM00382">
    <property type="entry name" value="AAA"/>
    <property type="match status" value="1"/>
</dbReference>
<dbReference type="SUPFAM" id="SSF52540">
    <property type="entry name" value="P-loop containing nucleoside triphosphate hydrolases"/>
    <property type="match status" value="1"/>
</dbReference>
<dbReference type="PROSITE" id="PS00211">
    <property type="entry name" value="ABC_TRANSPORTER_1"/>
    <property type="match status" value="1"/>
</dbReference>
<dbReference type="PROSITE" id="PS50893">
    <property type="entry name" value="ABC_TRANSPORTER_2"/>
    <property type="match status" value="1"/>
</dbReference>
<dbReference type="PROSITE" id="PS51238">
    <property type="entry name" value="PSTB"/>
    <property type="match status" value="1"/>
</dbReference>
<gene>
    <name evidence="1" type="primary">pstB</name>
    <name type="ordered locus">RPC_4920</name>
</gene>
<keyword id="KW-0067">ATP-binding</keyword>
<keyword id="KW-0997">Cell inner membrane</keyword>
<keyword id="KW-1003">Cell membrane</keyword>
<keyword id="KW-0472">Membrane</keyword>
<keyword id="KW-0547">Nucleotide-binding</keyword>
<keyword id="KW-0592">Phosphate transport</keyword>
<keyword id="KW-1278">Translocase</keyword>
<keyword id="KW-0813">Transport</keyword>
<reference key="1">
    <citation type="submission" date="2006-03" db="EMBL/GenBank/DDBJ databases">
        <title>Complete sequence of Rhodopseudomonas palustris BisB18.</title>
        <authorList>
            <consortium name="US DOE Joint Genome Institute"/>
            <person name="Copeland A."/>
            <person name="Lucas S."/>
            <person name="Lapidus A."/>
            <person name="Barry K."/>
            <person name="Detter J.C."/>
            <person name="Glavina del Rio T."/>
            <person name="Hammon N."/>
            <person name="Israni S."/>
            <person name="Dalin E."/>
            <person name="Tice H."/>
            <person name="Pitluck S."/>
            <person name="Chain P."/>
            <person name="Malfatti S."/>
            <person name="Shin M."/>
            <person name="Vergez L."/>
            <person name="Schmutz J."/>
            <person name="Larimer F."/>
            <person name="Land M."/>
            <person name="Hauser L."/>
            <person name="Pelletier D.A."/>
            <person name="Kyrpides N."/>
            <person name="Anderson I."/>
            <person name="Oda Y."/>
            <person name="Harwood C.S."/>
            <person name="Richardson P."/>
        </authorList>
    </citation>
    <scope>NUCLEOTIDE SEQUENCE [LARGE SCALE GENOMIC DNA]</scope>
    <source>
        <strain>BisB18</strain>
    </source>
</reference>
<feature type="chain" id="PRO_0000272513" description="Phosphate import ATP-binding protein PstB">
    <location>
        <begin position="1"/>
        <end position="275"/>
    </location>
</feature>
<feature type="domain" description="ABC transporter" evidence="1">
    <location>
        <begin position="29"/>
        <end position="270"/>
    </location>
</feature>
<feature type="binding site" evidence="1">
    <location>
        <begin position="61"/>
        <end position="68"/>
    </location>
    <ligand>
        <name>ATP</name>
        <dbReference type="ChEBI" id="CHEBI:30616"/>
    </ligand>
</feature>
<comment type="function">
    <text evidence="1">Part of the ABC transporter complex PstSACB involved in phosphate import. Responsible for energy coupling to the transport system.</text>
</comment>
<comment type="catalytic activity">
    <reaction evidence="1">
        <text>phosphate(out) + ATP + H2O = ADP + 2 phosphate(in) + H(+)</text>
        <dbReference type="Rhea" id="RHEA:24440"/>
        <dbReference type="ChEBI" id="CHEBI:15377"/>
        <dbReference type="ChEBI" id="CHEBI:15378"/>
        <dbReference type="ChEBI" id="CHEBI:30616"/>
        <dbReference type="ChEBI" id="CHEBI:43474"/>
        <dbReference type="ChEBI" id="CHEBI:456216"/>
        <dbReference type="EC" id="7.3.2.1"/>
    </reaction>
</comment>
<comment type="subunit">
    <text evidence="1">The complex is composed of two ATP-binding proteins (PstB), two transmembrane proteins (PstC and PstA) and a solute-binding protein (PstS).</text>
</comment>
<comment type="subcellular location">
    <subcellularLocation>
        <location evidence="1">Cell inner membrane</location>
        <topology evidence="1">Peripheral membrane protein</topology>
    </subcellularLocation>
</comment>
<comment type="similarity">
    <text evidence="1">Belongs to the ABC transporter superfamily. Phosphate importer (TC 3.A.1.7) family.</text>
</comment>
<evidence type="ECO:0000255" key="1">
    <source>
        <dbReference type="HAMAP-Rule" id="MF_01702"/>
    </source>
</evidence>
<proteinExistence type="inferred from homology"/>
<organism>
    <name type="scientific">Rhodopseudomonas palustris (strain BisB18)</name>
    <dbReference type="NCBI Taxonomy" id="316056"/>
    <lineage>
        <taxon>Bacteria</taxon>
        <taxon>Pseudomonadati</taxon>
        <taxon>Pseudomonadota</taxon>
        <taxon>Alphaproteobacteria</taxon>
        <taxon>Hyphomicrobiales</taxon>
        <taxon>Nitrobacteraceae</taxon>
        <taxon>Rhodopseudomonas</taxon>
    </lineage>
</organism>
<protein>
    <recommendedName>
        <fullName evidence="1">Phosphate import ATP-binding protein PstB</fullName>
        <ecNumber evidence="1">7.3.2.1</ecNumber>
    </recommendedName>
    <alternativeName>
        <fullName evidence="1">ABC phosphate transporter</fullName>
    </alternativeName>
    <alternativeName>
        <fullName evidence="1">Phosphate-transporting ATPase</fullName>
    </alternativeName>
</protein>
<name>PSTB_RHOPB</name>
<accession>Q20WP4</accession>
<sequence>MTEISITTSVPDAGAPPSVVGGQVERAKVSVRDLNFYYGDNHALKAINLNLIANRVTAFIGPSGCGKSTLLRVFNRMYDLYPGQRATGQVMLDSQNVLDAKLDLNLLRARVGMVFQKPTPFPMTIYENIAFGVRLYEKISKSEMDNRVERALRGGALWNEVKDQLGASGLSLSGGQQQRLCIARTIAVRPEVILFDEPCSALDPISTAKIEELIDELKEDYTIAIVTHNMQQAARVSDSTAFMYLGELIEFGETNKIFTSPTDRRTQDYITGRFG</sequence>